<protein>
    <recommendedName>
        <fullName>Uncharacterized protein YkzL</fullName>
    </recommendedName>
</protein>
<organism>
    <name type="scientific">Bacillus subtilis (strain 168)</name>
    <dbReference type="NCBI Taxonomy" id="224308"/>
    <lineage>
        <taxon>Bacteria</taxon>
        <taxon>Bacillati</taxon>
        <taxon>Bacillota</taxon>
        <taxon>Bacilli</taxon>
        <taxon>Bacillales</taxon>
        <taxon>Bacillaceae</taxon>
        <taxon>Bacillus</taxon>
    </lineage>
</organism>
<name>YKZL_BACSU</name>
<proteinExistence type="predicted"/>
<feature type="chain" id="PRO_0000381933" description="Uncharacterized protein YkzL">
    <location>
        <begin position="1"/>
        <end position="127"/>
    </location>
</feature>
<sequence>MLIEPTDVASYSVYDRVKNRPEELLAQDIIEAEAEAALITGHRFEDSLYDPLPGKVKLALVKLAQYFALVNSDESASSSYQYEKMGDYSYTVSGEGRIQRPEVYHLLEEFIKPGYVPESSRLKVRSL</sequence>
<gene>
    <name type="primary">ykzL</name>
    <name type="ordered locus">BSU12619</name>
</gene>
<accession>C0H3Z6</accession>
<keyword id="KW-1185">Reference proteome</keyword>
<dbReference type="EMBL" id="AL009126">
    <property type="protein sequence ID" value="CAX52603.1"/>
    <property type="molecule type" value="Genomic_DNA"/>
</dbReference>
<dbReference type="RefSeq" id="WP_003245011.1">
    <property type="nucleotide sequence ID" value="NZ_OZ025638.1"/>
</dbReference>
<dbReference type="RefSeq" id="YP_003097713.1">
    <property type="nucleotide sequence ID" value="NC_000964.3"/>
</dbReference>
<dbReference type="SMR" id="C0H3Z6"/>
<dbReference type="FunCoup" id="C0H3Z6">
    <property type="interactions" value="34"/>
</dbReference>
<dbReference type="STRING" id="224308.BSU12619"/>
<dbReference type="PaxDb" id="224308-BSU12619"/>
<dbReference type="EnsemblBacteria" id="CAX52603">
    <property type="protein sequence ID" value="CAX52603"/>
    <property type="gene ID" value="BSU_12619"/>
</dbReference>
<dbReference type="GeneID" id="8302945"/>
<dbReference type="KEGG" id="bsu:BSU12619"/>
<dbReference type="PATRIC" id="fig|224308.179.peg.1366"/>
<dbReference type="eggNOG" id="ENOG5033JW4">
    <property type="taxonomic scope" value="Bacteria"/>
</dbReference>
<dbReference type="InParanoid" id="C0H3Z6"/>
<dbReference type="OrthoDB" id="2680636at2"/>
<dbReference type="BioCyc" id="BSUB:BSU12619-MONOMER"/>
<dbReference type="Proteomes" id="UP000001570">
    <property type="component" value="Chromosome"/>
</dbReference>
<dbReference type="CDD" id="cd08053">
    <property type="entry name" value="Yqbg"/>
    <property type="match status" value="1"/>
</dbReference>
<dbReference type="Gene3D" id="1.10.3230.10">
    <property type="entry name" value="YqbG-like"/>
    <property type="match status" value="1"/>
</dbReference>
<dbReference type="InterPro" id="IPR013514">
    <property type="entry name" value="DUF3199_YqbG"/>
</dbReference>
<dbReference type="InterPro" id="IPR036558">
    <property type="entry name" value="YqbG-like_sf"/>
</dbReference>
<dbReference type="Pfam" id="PF11436">
    <property type="entry name" value="DUF3199"/>
    <property type="match status" value="1"/>
</dbReference>
<dbReference type="SUPFAM" id="SSF116915">
    <property type="entry name" value="Hypothetical protein YqbG"/>
    <property type="match status" value="1"/>
</dbReference>
<reference key="1">
    <citation type="journal article" date="1997" name="Nature">
        <title>The complete genome sequence of the Gram-positive bacterium Bacillus subtilis.</title>
        <authorList>
            <person name="Kunst F."/>
            <person name="Ogasawara N."/>
            <person name="Moszer I."/>
            <person name="Albertini A.M."/>
            <person name="Alloni G."/>
            <person name="Azevedo V."/>
            <person name="Bertero M.G."/>
            <person name="Bessieres P."/>
            <person name="Bolotin A."/>
            <person name="Borchert S."/>
            <person name="Borriss R."/>
            <person name="Boursier L."/>
            <person name="Brans A."/>
            <person name="Braun M."/>
            <person name="Brignell S.C."/>
            <person name="Bron S."/>
            <person name="Brouillet S."/>
            <person name="Bruschi C.V."/>
            <person name="Caldwell B."/>
            <person name="Capuano V."/>
            <person name="Carter N.M."/>
            <person name="Choi S.-K."/>
            <person name="Codani J.-J."/>
            <person name="Connerton I.F."/>
            <person name="Cummings N.J."/>
            <person name="Daniel R.A."/>
            <person name="Denizot F."/>
            <person name="Devine K.M."/>
            <person name="Duesterhoeft A."/>
            <person name="Ehrlich S.D."/>
            <person name="Emmerson P.T."/>
            <person name="Entian K.-D."/>
            <person name="Errington J."/>
            <person name="Fabret C."/>
            <person name="Ferrari E."/>
            <person name="Foulger D."/>
            <person name="Fritz C."/>
            <person name="Fujita M."/>
            <person name="Fujita Y."/>
            <person name="Fuma S."/>
            <person name="Galizzi A."/>
            <person name="Galleron N."/>
            <person name="Ghim S.-Y."/>
            <person name="Glaser P."/>
            <person name="Goffeau A."/>
            <person name="Golightly E.J."/>
            <person name="Grandi G."/>
            <person name="Guiseppi G."/>
            <person name="Guy B.J."/>
            <person name="Haga K."/>
            <person name="Haiech J."/>
            <person name="Harwood C.R."/>
            <person name="Henaut A."/>
            <person name="Hilbert H."/>
            <person name="Holsappel S."/>
            <person name="Hosono S."/>
            <person name="Hullo M.-F."/>
            <person name="Itaya M."/>
            <person name="Jones L.-M."/>
            <person name="Joris B."/>
            <person name="Karamata D."/>
            <person name="Kasahara Y."/>
            <person name="Klaerr-Blanchard M."/>
            <person name="Klein C."/>
            <person name="Kobayashi Y."/>
            <person name="Koetter P."/>
            <person name="Koningstein G."/>
            <person name="Krogh S."/>
            <person name="Kumano M."/>
            <person name="Kurita K."/>
            <person name="Lapidus A."/>
            <person name="Lardinois S."/>
            <person name="Lauber J."/>
            <person name="Lazarevic V."/>
            <person name="Lee S.-M."/>
            <person name="Levine A."/>
            <person name="Liu H."/>
            <person name="Masuda S."/>
            <person name="Mauel C."/>
            <person name="Medigue C."/>
            <person name="Medina N."/>
            <person name="Mellado R.P."/>
            <person name="Mizuno M."/>
            <person name="Moestl D."/>
            <person name="Nakai S."/>
            <person name="Noback M."/>
            <person name="Noone D."/>
            <person name="O'Reilly M."/>
            <person name="Ogawa K."/>
            <person name="Ogiwara A."/>
            <person name="Oudega B."/>
            <person name="Park S.-H."/>
            <person name="Parro V."/>
            <person name="Pohl T.M."/>
            <person name="Portetelle D."/>
            <person name="Porwollik S."/>
            <person name="Prescott A.M."/>
            <person name="Presecan E."/>
            <person name="Pujic P."/>
            <person name="Purnelle B."/>
            <person name="Rapoport G."/>
            <person name="Rey M."/>
            <person name="Reynolds S."/>
            <person name="Rieger M."/>
            <person name="Rivolta C."/>
            <person name="Rocha E."/>
            <person name="Roche B."/>
            <person name="Rose M."/>
            <person name="Sadaie Y."/>
            <person name="Sato T."/>
            <person name="Scanlan E."/>
            <person name="Schleich S."/>
            <person name="Schroeter R."/>
            <person name="Scoffone F."/>
            <person name="Sekiguchi J."/>
            <person name="Sekowska A."/>
            <person name="Seror S.J."/>
            <person name="Serror P."/>
            <person name="Shin B.-S."/>
            <person name="Soldo B."/>
            <person name="Sorokin A."/>
            <person name="Tacconi E."/>
            <person name="Takagi T."/>
            <person name="Takahashi H."/>
            <person name="Takemaru K."/>
            <person name="Takeuchi M."/>
            <person name="Tamakoshi A."/>
            <person name="Tanaka T."/>
            <person name="Terpstra P."/>
            <person name="Tognoni A."/>
            <person name="Tosato V."/>
            <person name="Uchiyama S."/>
            <person name="Vandenbol M."/>
            <person name="Vannier F."/>
            <person name="Vassarotti A."/>
            <person name="Viari A."/>
            <person name="Wambutt R."/>
            <person name="Wedler E."/>
            <person name="Wedler H."/>
            <person name="Weitzenegger T."/>
            <person name="Winters P."/>
            <person name="Wipat A."/>
            <person name="Yamamoto H."/>
            <person name="Yamane K."/>
            <person name="Yasumoto K."/>
            <person name="Yata K."/>
            <person name="Yoshida K."/>
            <person name="Yoshikawa H.-F."/>
            <person name="Zumstein E."/>
            <person name="Yoshikawa H."/>
            <person name="Danchin A."/>
        </authorList>
    </citation>
    <scope>NUCLEOTIDE SEQUENCE [LARGE SCALE GENOMIC DNA]</scope>
    <source>
        <strain>168</strain>
    </source>
</reference>